<proteinExistence type="inferred from homology"/>
<feature type="chain" id="PRO_1000009339" description="Leucine--tRNA ligase">
    <location>
        <begin position="1"/>
        <end position="962"/>
    </location>
</feature>
<feature type="short sequence motif" description="'HIGH' region">
    <location>
        <begin position="40"/>
        <end position="51"/>
    </location>
</feature>
<feature type="short sequence motif" description="'KMSKS' region">
    <location>
        <begin position="737"/>
        <end position="741"/>
    </location>
</feature>
<feature type="binding site" evidence="1">
    <location>
        <position position="740"/>
    </location>
    <ligand>
        <name>ATP</name>
        <dbReference type="ChEBI" id="CHEBI:30616"/>
    </ligand>
</feature>
<dbReference type="EC" id="6.1.1.4" evidence="1"/>
<dbReference type="EMBL" id="AM398681">
    <property type="protein sequence ID" value="CAL44418.1"/>
    <property type="molecule type" value="Genomic_DNA"/>
</dbReference>
<dbReference type="RefSeq" id="WP_011964452.1">
    <property type="nucleotide sequence ID" value="NC_009613.3"/>
</dbReference>
<dbReference type="RefSeq" id="YP_001297219.1">
    <property type="nucleotide sequence ID" value="NC_009613.3"/>
</dbReference>
<dbReference type="SMR" id="A6H244"/>
<dbReference type="STRING" id="402612.FP2363"/>
<dbReference type="EnsemblBacteria" id="CAL44418">
    <property type="protein sequence ID" value="CAL44418"/>
    <property type="gene ID" value="FP2363"/>
</dbReference>
<dbReference type="GeneID" id="66553471"/>
<dbReference type="KEGG" id="fps:FP2363"/>
<dbReference type="PATRIC" id="fig|402612.5.peg.2420"/>
<dbReference type="eggNOG" id="COG0495">
    <property type="taxonomic scope" value="Bacteria"/>
</dbReference>
<dbReference type="HOGENOM" id="CLU_004427_0_0_10"/>
<dbReference type="OrthoDB" id="9810365at2"/>
<dbReference type="Proteomes" id="UP000006394">
    <property type="component" value="Chromosome"/>
</dbReference>
<dbReference type="GO" id="GO:0005829">
    <property type="term" value="C:cytosol"/>
    <property type="evidence" value="ECO:0007669"/>
    <property type="project" value="TreeGrafter"/>
</dbReference>
<dbReference type="GO" id="GO:0002161">
    <property type="term" value="F:aminoacyl-tRNA deacylase activity"/>
    <property type="evidence" value="ECO:0007669"/>
    <property type="project" value="InterPro"/>
</dbReference>
<dbReference type="GO" id="GO:0005524">
    <property type="term" value="F:ATP binding"/>
    <property type="evidence" value="ECO:0007669"/>
    <property type="project" value="UniProtKB-UniRule"/>
</dbReference>
<dbReference type="GO" id="GO:0004823">
    <property type="term" value="F:leucine-tRNA ligase activity"/>
    <property type="evidence" value="ECO:0007669"/>
    <property type="project" value="UniProtKB-UniRule"/>
</dbReference>
<dbReference type="GO" id="GO:0006429">
    <property type="term" value="P:leucyl-tRNA aminoacylation"/>
    <property type="evidence" value="ECO:0007669"/>
    <property type="project" value="UniProtKB-UniRule"/>
</dbReference>
<dbReference type="CDD" id="cd07958">
    <property type="entry name" value="Anticodon_Ia_Leu_BEm"/>
    <property type="match status" value="1"/>
</dbReference>
<dbReference type="FunFam" id="3.40.50.620:FF:000056">
    <property type="entry name" value="Leucine--tRNA ligase"/>
    <property type="match status" value="1"/>
</dbReference>
<dbReference type="FunFam" id="3.40.50.620:FF:000060">
    <property type="entry name" value="Leucine--tRNA ligase"/>
    <property type="match status" value="1"/>
</dbReference>
<dbReference type="FunFam" id="1.10.730.10:FF:000011">
    <property type="entry name" value="Leucine--tRNA ligase chloroplastic/mitochondrial"/>
    <property type="match status" value="1"/>
</dbReference>
<dbReference type="Gene3D" id="3.40.50.620">
    <property type="entry name" value="HUPs"/>
    <property type="match status" value="3"/>
</dbReference>
<dbReference type="Gene3D" id="1.10.730.10">
    <property type="entry name" value="Isoleucyl-tRNA Synthetase, Domain 1"/>
    <property type="match status" value="1"/>
</dbReference>
<dbReference type="HAMAP" id="MF_00049_B">
    <property type="entry name" value="Leu_tRNA_synth_B"/>
    <property type="match status" value="1"/>
</dbReference>
<dbReference type="InterPro" id="IPR001412">
    <property type="entry name" value="aa-tRNA-synth_I_CS"/>
</dbReference>
<dbReference type="InterPro" id="IPR002300">
    <property type="entry name" value="aa-tRNA-synth_Ia"/>
</dbReference>
<dbReference type="InterPro" id="IPR002302">
    <property type="entry name" value="Leu-tRNA-ligase"/>
</dbReference>
<dbReference type="InterPro" id="IPR025709">
    <property type="entry name" value="Leu_tRNA-synth_edit"/>
</dbReference>
<dbReference type="InterPro" id="IPR013155">
    <property type="entry name" value="M/V/L/I-tRNA-synth_anticd-bd"/>
</dbReference>
<dbReference type="InterPro" id="IPR015413">
    <property type="entry name" value="Methionyl/Leucyl_tRNA_Synth"/>
</dbReference>
<dbReference type="InterPro" id="IPR014729">
    <property type="entry name" value="Rossmann-like_a/b/a_fold"/>
</dbReference>
<dbReference type="InterPro" id="IPR009080">
    <property type="entry name" value="tRNAsynth_Ia_anticodon-bd"/>
</dbReference>
<dbReference type="InterPro" id="IPR009008">
    <property type="entry name" value="Val/Leu/Ile-tRNA-synth_edit"/>
</dbReference>
<dbReference type="NCBIfam" id="TIGR00396">
    <property type="entry name" value="leuS_bact"/>
    <property type="match status" value="1"/>
</dbReference>
<dbReference type="PANTHER" id="PTHR43740:SF2">
    <property type="entry name" value="LEUCINE--TRNA LIGASE, MITOCHONDRIAL"/>
    <property type="match status" value="1"/>
</dbReference>
<dbReference type="PANTHER" id="PTHR43740">
    <property type="entry name" value="LEUCYL-TRNA SYNTHETASE"/>
    <property type="match status" value="1"/>
</dbReference>
<dbReference type="Pfam" id="PF08264">
    <property type="entry name" value="Anticodon_1"/>
    <property type="match status" value="1"/>
</dbReference>
<dbReference type="Pfam" id="PF00133">
    <property type="entry name" value="tRNA-synt_1"/>
    <property type="match status" value="1"/>
</dbReference>
<dbReference type="Pfam" id="PF13603">
    <property type="entry name" value="tRNA-synt_1_2"/>
    <property type="match status" value="1"/>
</dbReference>
<dbReference type="Pfam" id="PF09334">
    <property type="entry name" value="tRNA-synt_1g"/>
    <property type="match status" value="1"/>
</dbReference>
<dbReference type="PRINTS" id="PR00985">
    <property type="entry name" value="TRNASYNTHLEU"/>
</dbReference>
<dbReference type="SUPFAM" id="SSF47323">
    <property type="entry name" value="Anticodon-binding domain of a subclass of class I aminoacyl-tRNA synthetases"/>
    <property type="match status" value="1"/>
</dbReference>
<dbReference type="SUPFAM" id="SSF52374">
    <property type="entry name" value="Nucleotidylyl transferase"/>
    <property type="match status" value="1"/>
</dbReference>
<dbReference type="SUPFAM" id="SSF50677">
    <property type="entry name" value="ValRS/IleRS/LeuRS editing domain"/>
    <property type="match status" value="1"/>
</dbReference>
<dbReference type="PROSITE" id="PS00178">
    <property type="entry name" value="AA_TRNA_LIGASE_I"/>
    <property type="match status" value="1"/>
</dbReference>
<name>SYL_FLAPJ</name>
<comment type="catalytic activity">
    <reaction evidence="1">
        <text>tRNA(Leu) + L-leucine + ATP = L-leucyl-tRNA(Leu) + AMP + diphosphate</text>
        <dbReference type="Rhea" id="RHEA:11688"/>
        <dbReference type="Rhea" id="RHEA-COMP:9613"/>
        <dbReference type="Rhea" id="RHEA-COMP:9622"/>
        <dbReference type="ChEBI" id="CHEBI:30616"/>
        <dbReference type="ChEBI" id="CHEBI:33019"/>
        <dbReference type="ChEBI" id="CHEBI:57427"/>
        <dbReference type="ChEBI" id="CHEBI:78442"/>
        <dbReference type="ChEBI" id="CHEBI:78494"/>
        <dbReference type="ChEBI" id="CHEBI:456215"/>
        <dbReference type="EC" id="6.1.1.4"/>
    </reaction>
</comment>
<comment type="subcellular location">
    <subcellularLocation>
        <location evidence="1">Cytoplasm</location>
    </subcellularLocation>
</comment>
<comment type="similarity">
    <text evidence="1">Belongs to the class-I aminoacyl-tRNA synthetase family.</text>
</comment>
<accession>A6H244</accession>
<evidence type="ECO:0000255" key="1">
    <source>
        <dbReference type="HAMAP-Rule" id="MF_00049"/>
    </source>
</evidence>
<reference key="1">
    <citation type="journal article" date="2007" name="Nat. Biotechnol.">
        <title>Complete genome sequence of the fish pathogen Flavobacterium psychrophilum.</title>
        <authorList>
            <person name="Duchaud E."/>
            <person name="Boussaha M."/>
            <person name="Loux V."/>
            <person name="Bernardet J.-F."/>
            <person name="Michel C."/>
            <person name="Kerouault B."/>
            <person name="Mondot S."/>
            <person name="Nicolas P."/>
            <person name="Bossy R."/>
            <person name="Caron C."/>
            <person name="Bessieres P."/>
            <person name="Gibrat J.-F."/>
            <person name="Claverol S."/>
            <person name="Dumetz F."/>
            <person name="Le Henaff M."/>
            <person name="Benmansour A."/>
        </authorList>
    </citation>
    <scope>NUCLEOTIDE SEQUENCE [LARGE SCALE GENOMIC DNA]</scope>
    <source>
        <strain>ATCC 49511 / DSM 21280 / CIP 103535 / JIP02/86</strain>
    </source>
</reference>
<organism>
    <name type="scientific">Flavobacterium psychrophilum (strain ATCC 49511 / DSM 21280 / CIP 103535 / JIP02/86)</name>
    <dbReference type="NCBI Taxonomy" id="402612"/>
    <lineage>
        <taxon>Bacteria</taxon>
        <taxon>Pseudomonadati</taxon>
        <taxon>Bacteroidota</taxon>
        <taxon>Flavobacteriia</taxon>
        <taxon>Flavobacteriales</taxon>
        <taxon>Flavobacteriaceae</taxon>
        <taxon>Flavobacterium</taxon>
    </lineage>
</organism>
<protein>
    <recommendedName>
        <fullName evidence="1">Leucine--tRNA ligase</fullName>
        <ecNumber evidence="1">6.1.1.4</ecNumber>
    </recommendedName>
    <alternativeName>
        <fullName evidence="1">Leucyl-tRNA synthetase</fullName>
        <shortName evidence="1">LeuRS</shortName>
    </alternativeName>
</protein>
<keyword id="KW-0030">Aminoacyl-tRNA synthetase</keyword>
<keyword id="KW-0067">ATP-binding</keyword>
<keyword id="KW-0963">Cytoplasm</keyword>
<keyword id="KW-0436">Ligase</keyword>
<keyword id="KW-0547">Nucleotide-binding</keyword>
<keyword id="KW-0648">Protein biosynthesis</keyword>
<keyword id="KW-1185">Reference proteome</keyword>
<gene>
    <name evidence="1" type="primary">leuS</name>
    <name type="ordered locus">FP2363</name>
</gene>
<sequence length="962" mass="109354">MKYNPNEIDAKWQKNWANNQTFAASNTSIKPKYYILDMFPYPSGAGLHVGHPLGYIASDIVARFKRHKGFNVLHPQGYDSFGLPAEQYAIQTGQHPDKTTKENIARYREQLDKIGFSFDWSREIRTSNANYYKHTQWIFIQLFNSWYNKSNDKAEDITTLISLFQKEGNTNINAVCDDNIAPFSAQDWTGFSSSKQQKILLQYRLTYLAETEVNWCPGLGTVLANDEIINGVSERGGHPVIRKKMTQWSMRISAYAERLLQGLNDIDWSESIKESQRNWIGKSVGAMVSFKVKNQKSQVTSEATLSDLRPSTLDYIEVFTTRPDTIFGVTFMTLAPEHPLVQEITTPEQKAAIEAYIEKTAKRSERERMADVKTISGVFTGAYAEHPFTKEQIPVWIGDYVLAGYGTGAVMAVPCGDERDYAFANFFKGQNGMPEIKNIFDNVDIATEAYGSKDNVIIANSDFLNGLNYKQATKKAIAELETLNQGKGKTNYRLRDAVFSRQRYWGEPFPVYYVNGLPQMIDAKHLPIALPEVEKYLPTEDGLPPLGNSAKWAWNTITNEVDFNENINNTTIYPLELNTMPGWAGSSWYWMRYMDPHNDNEFASPEAIKYWESVDLYIGGSEHATGHLLYARFWNKFLKDKGYAPTEEPFKKLINQGMILGNSAFVYRSEDSKKLYSKGLISDKTTQAIHVDLAIINETTNELDIEAFKKHPLYSDYANAEFILENGKYIVGREVEKMSKSKYNVVNPDDICNEYGADTLRLYEMFLGPLEQSKPWNTAGITGVFGFLKKLWRLYFDDNGLIVTNNEPSKESLKSLHKTIKKVTEDIENFSFNTSVSQFMICVNELGTQNCHERAILEPLAIILSPYAPHIAEELWSQLGNSESISTVAFPICHEKYLVESDKEYPVSFNGKMKFTINLPLDLTPAQIEEIIMKDERTIKQLDGNTPKKVIIIPGKVINLVG</sequence>